<proteinExistence type="inferred from homology"/>
<gene>
    <name evidence="1" type="primary">rplW</name>
    <name type="ordered locus">Exig_0098</name>
</gene>
<name>RL23_EXIS2</name>
<dbReference type="EMBL" id="CP001022">
    <property type="protein sequence ID" value="ACB59585.1"/>
    <property type="molecule type" value="Genomic_DNA"/>
</dbReference>
<dbReference type="RefSeq" id="WP_012369011.1">
    <property type="nucleotide sequence ID" value="NC_010556.1"/>
</dbReference>
<dbReference type="SMR" id="B1YGV2"/>
<dbReference type="STRING" id="262543.Exig_0098"/>
<dbReference type="KEGG" id="esi:Exig_0098"/>
<dbReference type="eggNOG" id="COG0089">
    <property type="taxonomic scope" value="Bacteria"/>
</dbReference>
<dbReference type="HOGENOM" id="CLU_037562_3_2_9"/>
<dbReference type="OrthoDB" id="9793353at2"/>
<dbReference type="Proteomes" id="UP000001681">
    <property type="component" value="Chromosome"/>
</dbReference>
<dbReference type="GO" id="GO:1990904">
    <property type="term" value="C:ribonucleoprotein complex"/>
    <property type="evidence" value="ECO:0007669"/>
    <property type="project" value="UniProtKB-KW"/>
</dbReference>
<dbReference type="GO" id="GO:0005840">
    <property type="term" value="C:ribosome"/>
    <property type="evidence" value="ECO:0007669"/>
    <property type="project" value="UniProtKB-KW"/>
</dbReference>
<dbReference type="GO" id="GO:0019843">
    <property type="term" value="F:rRNA binding"/>
    <property type="evidence" value="ECO:0007669"/>
    <property type="project" value="UniProtKB-UniRule"/>
</dbReference>
<dbReference type="GO" id="GO:0003735">
    <property type="term" value="F:structural constituent of ribosome"/>
    <property type="evidence" value="ECO:0007669"/>
    <property type="project" value="InterPro"/>
</dbReference>
<dbReference type="GO" id="GO:0006412">
    <property type="term" value="P:translation"/>
    <property type="evidence" value="ECO:0007669"/>
    <property type="project" value="UniProtKB-UniRule"/>
</dbReference>
<dbReference type="FunFam" id="3.30.70.330:FF:000001">
    <property type="entry name" value="50S ribosomal protein L23"/>
    <property type="match status" value="1"/>
</dbReference>
<dbReference type="Gene3D" id="3.30.70.330">
    <property type="match status" value="1"/>
</dbReference>
<dbReference type="HAMAP" id="MF_01369_B">
    <property type="entry name" value="Ribosomal_uL23_B"/>
    <property type="match status" value="1"/>
</dbReference>
<dbReference type="InterPro" id="IPR012677">
    <property type="entry name" value="Nucleotide-bd_a/b_plait_sf"/>
</dbReference>
<dbReference type="InterPro" id="IPR013025">
    <property type="entry name" value="Ribosomal_uL23-like"/>
</dbReference>
<dbReference type="InterPro" id="IPR012678">
    <property type="entry name" value="Ribosomal_uL23/eL15/eS24_sf"/>
</dbReference>
<dbReference type="NCBIfam" id="NF004363">
    <property type="entry name" value="PRK05738.2-4"/>
    <property type="match status" value="1"/>
</dbReference>
<dbReference type="PANTHER" id="PTHR11620">
    <property type="entry name" value="60S RIBOSOMAL PROTEIN L23A"/>
    <property type="match status" value="1"/>
</dbReference>
<dbReference type="Pfam" id="PF00276">
    <property type="entry name" value="Ribosomal_L23"/>
    <property type="match status" value="1"/>
</dbReference>
<dbReference type="SUPFAM" id="SSF54189">
    <property type="entry name" value="Ribosomal proteins S24e, L23 and L15e"/>
    <property type="match status" value="1"/>
</dbReference>
<keyword id="KW-1185">Reference proteome</keyword>
<keyword id="KW-0687">Ribonucleoprotein</keyword>
<keyword id="KW-0689">Ribosomal protein</keyword>
<keyword id="KW-0694">RNA-binding</keyword>
<keyword id="KW-0699">rRNA-binding</keyword>
<organism>
    <name type="scientific">Exiguobacterium sibiricum (strain DSM 17290 / CCUG 55495 / CIP 109462 / JCM 13490 / 255-15)</name>
    <dbReference type="NCBI Taxonomy" id="262543"/>
    <lineage>
        <taxon>Bacteria</taxon>
        <taxon>Bacillati</taxon>
        <taxon>Bacillota</taxon>
        <taxon>Bacilli</taxon>
        <taxon>Bacillales</taxon>
        <taxon>Bacillales Family XII. Incertae Sedis</taxon>
        <taxon>Exiguobacterium</taxon>
    </lineage>
</organism>
<reference key="1">
    <citation type="submission" date="2008-04" db="EMBL/GenBank/DDBJ databases">
        <title>Complete sequence of chromosome of Exiguobacterium sibiricum 255-15.</title>
        <authorList>
            <consortium name="US DOE Joint Genome Institute"/>
            <person name="Copeland A."/>
            <person name="Lucas S."/>
            <person name="Lapidus A."/>
            <person name="Glavina del Rio T."/>
            <person name="Dalin E."/>
            <person name="Tice H."/>
            <person name="Bruce D."/>
            <person name="Goodwin L."/>
            <person name="Pitluck S."/>
            <person name="Kiss H."/>
            <person name="Chertkov O."/>
            <person name="Monk C."/>
            <person name="Brettin T."/>
            <person name="Detter J.C."/>
            <person name="Han C."/>
            <person name="Kuske C.R."/>
            <person name="Schmutz J."/>
            <person name="Larimer F."/>
            <person name="Land M."/>
            <person name="Hauser L."/>
            <person name="Kyrpides N."/>
            <person name="Mikhailova N."/>
            <person name="Vishnivetskaya T."/>
            <person name="Rodrigues D.F."/>
            <person name="Gilichinsky D."/>
            <person name="Tiedje J."/>
            <person name="Richardson P."/>
        </authorList>
    </citation>
    <scope>NUCLEOTIDE SEQUENCE [LARGE SCALE GENOMIC DNA]</scope>
    <source>
        <strain>DSM 17290 / CCUG 55495 / CIP 109462 / JCM 13490 / 255-15</strain>
    </source>
</reference>
<protein>
    <recommendedName>
        <fullName evidence="1">Large ribosomal subunit protein uL23</fullName>
    </recommendedName>
    <alternativeName>
        <fullName evidence="2">50S ribosomal protein L23</fullName>
    </alternativeName>
</protein>
<feature type="chain" id="PRO_1000144565" description="Large ribosomal subunit protein uL23">
    <location>
        <begin position="1"/>
        <end position="94"/>
    </location>
</feature>
<evidence type="ECO:0000255" key="1">
    <source>
        <dbReference type="HAMAP-Rule" id="MF_01369"/>
    </source>
</evidence>
<evidence type="ECO:0000305" key="2"/>
<comment type="function">
    <text evidence="1">One of the early assembly proteins it binds 23S rRNA. One of the proteins that surrounds the polypeptide exit tunnel on the outside of the ribosome. Forms the main docking site for trigger factor binding to the ribosome.</text>
</comment>
<comment type="subunit">
    <text evidence="1">Part of the 50S ribosomal subunit. Contacts protein L29, and trigger factor when it is bound to the ribosome.</text>
</comment>
<comment type="similarity">
    <text evidence="1">Belongs to the universal ribosomal protein uL23 family.</text>
</comment>
<accession>B1YGV2</accession>
<sequence>MANAHDIIKRPVITERSVNQMAEKKYTFEVDVKASKTQIKDAVEAIFGVKVEKINTLISKPKAKRVGRHAGYTARRKKAVVTLTADSKELDYLG</sequence>